<reference key="1">
    <citation type="journal article" date="1988" name="Virology">
        <title>Influenza B virus evolution: co-circulating lineages and comparison of evolutionary pattern with those of influenza A and C viruses.</title>
        <authorList>
            <person name="Yamashita M."/>
            <person name="Krystal M."/>
            <person name="Fitch W.M."/>
            <person name="Palese P."/>
        </authorList>
    </citation>
    <scope>NUCLEOTIDE SEQUENCE [GENOMIC RNA]</scope>
</reference>
<reference key="2">
    <citation type="journal article" date="2003" name="Virology">
        <title>Intracellular warfare between human influenza viruses and human cells: the roles of the viral NS1 protein.</title>
        <authorList>
            <person name="Krug R.M."/>
            <person name="Yuan W."/>
            <person name="Noah D.L."/>
            <person name="Latham A.G."/>
        </authorList>
    </citation>
    <scope>REVIEW</scope>
</reference>
<organism>
    <name type="scientific">Influenza B virus (strain B/HT/1984)</name>
    <dbReference type="NCBI Taxonomy" id="11532"/>
    <lineage>
        <taxon>Viruses</taxon>
        <taxon>Riboviria</taxon>
        <taxon>Orthornavirae</taxon>
        <taxon>Negarnaviricota</taxon>
        <taxon>Polyploviricotina</taxon>
        <taxon>Insthoviricetes</taxon>
        <taxon>Articulavirales</taxon>
        <taxon>Orthomyxoviridae</taxon>
        <taxon>Betainfluenzavirus</taxon>
        <taxon>Betainfluenzavirus influenzae</taxon>
        <taxon>Influenza B virus</taxon>
    </lineage>
</organism>
<comment type="function">
    <text evidence="1">Binds and inhibits the conjugation of the ubiquitin-like G1P2/ISG15 protein to its target proteins. Since G1P2/ISG15 is an early antiviral protein, NS1 may inhibit the host antiviral response. Prevents EIF2AK2/PKR activation, either by binding double strand RNA or by interacting directly with EIF2AK2/PKR. Also binds poly(A) and U6 snRNA.</text>
</comment>
<comment type="subunit">
    <text evidence="1">Homodimer. Interacts with and inhibits human G1P2 conjugation by UBE1L.</text>
</comment>
<comment type="subcellular location">
    <subcellularLocation>
        <location evidence="1">Host cytoplasm</location>
    </subcellularLocation>
    <subcellularLocation>
        <location evidence="1">Host nucleus</location>
    </subcellularLocation>
</comment>
<comment type="alternative products">
    <event type="alternative splicing"/>
    <isoform>
        <id>P12595-1</id>
        <name>NS1</name>
        <sequence type="displayed"/>
    </isoform>
    <isoform>
        <id>P12595-2</id>
        <name>NEP</name>
        <name>NS2</name>
        <sequence type="not described"/>
    </isoform>
</comment>
<comment type="similarity">
    <text evidence="1">Belongs to the influenza B viruses NS1 family.</text>
</comment>
<accession>P12595</accession>
<keyword id="KW-0025">Alternative splicing</keyword>
<keyword id="KW-1035">Host cytoplasm</keyword>
<keyword id="KW-1048">Host nucleus</keyword>
<keyword id="KW-0945">Host-virus interaction</keyword>
<keyword id="KW-1090">Inhibition of host innate immune response by virus</keyword>
<keyword id="KW-1114">Inhibition of host interferon signaling pathway by virus</keyword>
<keyword id="KW-1095">Inhibition of host ISG15 by virus</keyword>
<keyword id="KW-1102">Inhibition of host PKR by virus</keyword>
<keyword id="KW-0922">Interferon antiviral system evasion</keyword>
<keyword id="KW-0694">RNA-binding</keyword>
<keyword id="KW-0899">Viral immunoevasion</keyword>
<gene>
    <name evidence="1" type="primary">NS</name>
</gene>
<dbReference type="EMBL" id="M19789">
    <property type="protein sequence ID" value="AAA43721.1"/>
    <property type="molecule type" value="Genomic_RNA"/>
</dbReference>
<dbReference type="SMR" id="P12595"/>
<dbReference type="GO" id="GO:0030430">
    <property type="term" value="C:host cell cytoplasm"/>
    <property type="evidence" value="ECO:0007669"/>
    <property type="project" value="UniProtKB-SubCell"/>
</dbReference>
<dbReference type="GO" id="GO:0042025">
    <property type="term" value="C:host cell nucleus"/>
    <property type="evidence" value="ECO:0007669"/>
    <property type="project" value="UniProtKB-SubCell"/>
</dbReference>
<dbReference type="GO" id="GO:0030291">
    <property type="term" value="F:protein serine/threonine kinase inhibitor activity"/>
    <property type="evidence" value="ECO:0007669"/>
    <property type="project" value="UniProtKB-KW"/>
</dbReference>
<dbReference type="GO" id="GO:0003723">
    <property type="term" value="F:RNA binding"/>
    <property type="evidence" value="ECO:0007669"/>
    <property type="project" value="UniProtKB-KW"/>
</dbReference>
<dbReference type="GO" id="GO:0039579">
    <property type="term" value="P:symbiont-mediated suppression of host ISG15-protein conjugation"/>
    <property type="evidence" value="ECO:0007669"/>
    <property type="project" value="UniProtKB-KW"/>
</dbReference>
<dbReference type="GO" id="GO:0039580">
    <property type="term" value="P:symbiont-mediated suppression of host PKR/eIFalpha signaling"/>
    <property type="evidence" value="ECO:0007669"/>
    <property type="project" value="UniProtKB-KW"/>
</dbReference>
<dbReference type="GO" id="GO:0039502">
    <property type="term" value="P:symbiont-mediated suppression of host type I interferon-mediated signaling pathway"/>
    <property type="evidence" value="ECO:0007669"/>
    <property type="project" value="UniProtKB-KW"/>
</dbReference>
<dbReference type="Gene3D" id="1.10.287.10">
    <property type="entry name" value="S15/NS1, RNA-binding"/>
    <property type="match status" value="1"/>
</dbReference>
<dbReference type="HAMAP" id="MF_04066">
    <property type="entry name" value="INFV_NS1"/>
    <property type="match status" value="1"/>
</dbReference>
<dbReference type="InterPro" id="IPR004208">
    <property type="entry name" value="NS1"/>
</dbReference>
<dbReference type="InterPro" id="IPR009068">
    <property type="entry name" value="uS15_NS1_RNA-bd_sf"/>
</dbReference>
<dbReference type="Pfam" id="PF02942">
    <property type="entry name" value="Flu_B_NS1"/>
    <property type="match status" value="1"/>
</dbReference>
<dbReference type="PIRSF" id="PIRSF003938">
    <property type="entry name" value="Flu_B_NS1"/>
    <property type="match status" value="1"/>
</dbReference>
<dbReference type="SUPFAM" id="SSF47060">
    <property type="entry name" value="S15/NS1 RNA-binding domain"/>
    <property type="match status" value="1"/>
</dbReference>
<organismHost>
    <name type="scientific">Homo sapiens</name>
    <name type="common">Human</name>
    <dbReference type="NCBI Taxonomy" id="9606"/>
</organismHost>
<feature type="chain" id="PRO_0000078964" description="Non-structural protein 1">
    <location>
        <begin position="1"/>
        <end position="281"/>
    </location>
</feature>
<feature type="region of interest" description="G1P2-binding">
    <location>
        <begin position="1"/>
        <end position="103"/>
    </location>
</feature>
<feature type="region of interest" description="RNA-binding and homodimerization" evidence="1">
    <location>
        <begin position="1"/>
        <end position="93"/>
    </location>
</feature>
<feature type="short sequence motif" description="Nuclear localization signal" evidence="1">
    <location>
        <begin position="50"/>
        <end position="55"/>
    </location>
</feature>
<protein>
    <recommendedName>
        <fullName evidence="1">Non-structural protein 1</fullName>
        <shortName evidence="1">NS1</shortName>
    </recommendedName>
    <alternativeName>
        <fullName evidence="1">NS1A</fullName>
    </alternativeName>
</protein>
<name>NS1_INBHT</name>
<proteinExistence type="inferred from homology"/>
<evidence type="ECO:0000255" key="1">
    <source>
        <dbReference type="HAMAP-Rule" id="MF_04066"/>
    </source>
</evidence>
<sequence>MADHMNTTQIEVGPGATNDTINFGAGILECYERLSWQRALDYPGQDRLNRLKRKLESRIKTHNKSEPEGTRMSLEERKAIGVKMMKVLLFMNPSAGIEGFEPYCMKNSSNSNCPNYNWTDYPPTPGRCLDDIEEEPEDVDDPTEIVLRDMNNKDARQKIKEEVNTQKEGKFRLTIKRDIRNVLSLRVLVNGTFLKHPNGYKTLSTLHRLNAYDQSGRLVAKLVATDDLTVEDEEDGHRILNSLFERLNEGHSKPIRAAETAVGVLSQFGQEHRLSPEEGDN</sequence>